<gene>
    <name type="ordered locus">sll1404</name>
</gene>
<dbReference type="EMBL" id="BA000022">
    <property type="protein sequence ID" value="BAA16604.1"/>
    <property type="molecule type" value="Genomic_DNA"/>
</dbReference>
<dbReference type="PIR" id="S74452">
    <property type="entry name" value="S74452"/>
</dbReference>
<dbReference type="SMR" id="P72604"/>
<dbReference type="IntAct" id="P72604">
    <property type="interactions" value="1"/>
</dbReference>
<dbReference type="STRING" id="1148.gene:10497459"/>
<dbReference type="TCDB" id="1.A.30.2.10">
    <property type="family name" value="the h(+)- or na(+)-translocating bacterial flagellar motor/exbbd outer membrane transport energizer (mot/exb) superfamily"/>
</dbReference>
<dbReference type="PaxDb" id="1148-1651676"/>
<dbReference type="EnsemblBacteria" id="BAA16604">
    <property type="protein sequence ID" value="BAA16604"/>
    <property type="gene ID" value="BAA16604"/>
</dbReference>
<dbReference type="KEGG" id="syn:sll1404"/>
<dbReference type="eggNOG" id="COG0811">
    <property type="taxonomic scope" value="Bacteria"/>
</dbReference>
<dbReference type="InParanoid" id="P72604"/>
<dbReference type="PhylomeDB" id="P72604"/>
<dbReference type="Proteomes" id="UP000001425">
    <property type="component" value="Chromosome"/>
</dbReference>
<dbReference type="GO" id="GO:0005886">
    <property type="term" value="C:plasma membrane"/>
    <property type="evidence" value="ECO:0000318"/>
    <property type="project" value="GO_Central"/>
</dbReference>
<dbReference type="GO" id="GO:0017038">
    <property type="term" value="P:protein import"/>
    <property type="evidence" value="ECO:0000318"/>
    <property type="project" value="GO_Central"/>
</dbReference>
<dbReference type="InterPro" id="IPR050790">
    <property type="entry name" value="ExbB/TolQ_transport"/>
</dbReference>
<dbReference type="InterPro" id="IPR002898">
    <property type="entry name" value="MotA_ExbB_proton_chnl"/>
</dbReference>
<dbReference type="PANTHER" id="PTHR30625:SF15">
    <property type="entry name" value="BIOPOLYMER TRANSPORT PROTEIN EXBB"/>
    <property type="match status" value="1"/>
</dbReference>
<dbReference type="PANTHER" id="PTHR30625">
    <property type="entry name" value="PROTEIN TOLQ"/>
    <property type="match status" value="1"/>
</dbReference>
<dbReference type="Pfam" id="PF01618">
    <property type="entry name" value="MotA_ExbB"/>
    <property type="match status" value="1"/>
</dbReference>
<protein>
    <recommendedName>
        <fullName>Putative biopolymer transport protein ExbB-like 3</fullName>
    </recommendedName>
</protein>
<evidence type="ECO:0000250" key="1"/>
<evidence type="ECO:0000255" key="2"/>
<evidence type="ECO:0000305" key="3"/>
<comment type="function">
    <text evidence="1">Involved in the TonB-dependent energy-dependent transport of various receptor-bound substrates. Protects ExbD from proteolytic degradation and functionally stabilizes TonB (By similarity).</text>
</comment>
<comment type="subcellular location">
    <subcellularLocation>
        <location evidence="3">Cell inner membrane</location>
        <topology evidence="3">Multi-pass membrane protein</topology>
    </subcellularLocation>
</comment>
<comment type="similarity">
    <text evidence="3">Belongs to the ExbB/TolQ family.</text>
</comment>
<keyword id="KW-0997">Cell inner membrane</keyword>
<keyword id="KW-1003">Cell membrane</keyword>
<keyword id="KW-0472">Membrane</keyword>
<keyword id="KW-0653">Protein transport</keyword>
<keyword id="KW-1185">Reference proteome</keyword>
<keyword id="KW-0812">Transmembrane</keyword>
<keyword id="KW-1133">Transmembrane helix</keyword>
<keyword id="KW-0813">Transport</keyword>
<feature type="chain" id="PRO_0000145821" description="Putative biopolymer transport protein ExbB-like 3">
    <location>
        <begin position="1"/>
        <end position="210"/>
    </location>
</feature>
<feature type="transmembrane region" description="Helical" evidence="2">
    <location>
        <begin position="2"/>
        <end position="22"/>
    </location>
</feature>
<feature type="transmembrane region" description="Helical" evidence="2">
    <location>
        <begin position="104"/>
        <end position="124"/>
    </location>
</feature>
<feature type="transmembrane region" description="Helical" evidence="2">
    <location>
        <begin position="152"/>
        <end position="172"/>
    </location>
</feature>
<name>EXBL3_SYNY3</name>
<organism>
    <name type="scientific">Synechocystis sp. (strain ATCC 27184 / PCC 6803 / Kazusa)</name>
    <dbReference type="NCBI Taxonomy" id="1111708"/>
    <lineage>
        <taxon>Bacteria</taxon>
        <taxon>Bacillati</taxon>
        <taxon>Cyanobacteriota</taxon>
        <taxon>Cyanophyceae</taxon>
        <taxon>Synechococcales</taxon>
        <taxon>Merismopediaceae</taxon>
        <taxon>Synechocystis</taxon>
    </lineage>
</organism>
<sequence>MAGGIVAVPLLGFSLLAVALIIERAYFWSQIQLRQNRLVNDVLKLYRSNPPGAIAKLKQNADLPMARIFLEALCLEGATPTEFRLALESATQAELPLLKRFNTLFQTIITVSPLLGLLGTILGLMRSFSSMSLGSTTAANASGVTGGISEALVSTVMGLVVAIATLLFANVFRSLYLRQFALIQEQTGQIELVYRRFHDQPEEKEYATSR</sequence>
<reference key="1">
    <citation type="journal article" date="1996" name="DNA Res.">
        <title>Sequence analysis of the genome of the unicellular cyanobacterium Synechocystis sp. strain PCC6803. II. Sequence determination of the entire genome and assignment of potential protein-coding regions.</title>
        <authorList>
            <person name="Kaneko T."/>
            <person name="Sato S."/>
            <person name="Kotani H."/>
            <person name="Tanaka A."/>
            <person name="Asamizu E."/>
            <person name="Nakamura Y."/>
            <person name="Miyajima N."/>
            <person name="Hirosawa M."/>
            <person name="Sugiura M."/>
            <person name="Sasamoto S."/>
            <person name="Kimura T."/>
            <person name="Hosouchi T."/>
            <person name="Matsuno A."/>
            <person name="Muraki A."/>
            <person name="Nakazaki N."/>
            <person name="Naruo K."/>
            <person name="Okumura S."/>
            <person name="Shimpo S."/>
            <person name="Takeuchi C."/>
            <person name="Wada T."/>
            <person name="Watanabe A."/>
            <person name="Yamada M."/>
            <person name="Yasuda M."/>
            <person name="Tabata S."/>
        </authorList>
    </citation>
    <scope>NUCLEOTIDE SEQUENCE [LARGE SCALE GENOMIC DNA]</scope>
    <source>
        <strain>ATCC 27184 / PCC 6803 / Kazusa</strain>
    </source>
</reference>
<proteinExistence type="inferred from homology"/>
<accession>P72604</accession>